<sequence>MIMRMTLTLFVLVVMTAASASGDALTEAKRIPYCGQTGAECYSWCIKQDLSKDWCCDFVKTIARLPPAHICSQ</sequence>
<name>CKNB_CONIM</name>
<evidence type="ECO:0000250" key="1">
    <source>
        <dbReference type="UniProtKB" id="D0PX84"/>
    </source>
</evidence>
<evidence type="ECO:0000255" key="2"/>
<evidence type="ECO:0000269" key="3">
    <source>
    </source>
</evidence>
<evidence type="ECO:0000269" key="4">
    <source>
    </source>
</evidence>
<evidence type="ECO:0000303" key="5">
    <source>
    </source>
</evidence>
<evidence type="ECO:0000303" key="6">
    <source>
    </source>
</evidence>
<evidence type="ECO:0000305" key="7"/>
<evidence type="ECO:0000305" key="8">
    <source>
    </source>
</evidence>
<evidence type="ECO:0000305" key="9">
    <source>
    </source>
</evidence>
<evidence type="ECO:0000312" key="10">
    <source>
        <dbReference type="EMBL" id="AME17667.1"/>
    </source>
</evidence>
<proteinExistence type="evidence at protein level"/>
<accession>D0PX85</accession>
<accession>A0A125S9E3</accession>
<keyword id="KW-0165">Cleavage on pair of basic residues</keyword>
<keyword id="KW-0903">Direct protein sequencing</keyword>
<keyword id="KW-1015">Disulfide bond</keyword>
<keyword id="KW-0528">Neurotoxin</keyword>
<keyword id="KW-0964">Secreted</keyword>
<keyword id="KW-0732">Signal</keyword>
<keyword id="KW-0800">Toxin</keyword>
<comment type="function">
    <text evidence="3">Neurotoxin that induces excitatory symptoms in mice following intracranial administration. No symptoms are observed after intraperitoneal and intravenous (tail vein) injections.</text>
</comment>
<comment type="subcellular location">
    <subcellularLocation>
        <location evidence="3 4">Secreted</location>
    </subcellularLocation>
</comment>
<comment type="tissue specificity">
    <text evidence="8 9">Expressed by the venom duct.</text>
</comment>
<comment type="domain">
    <text evidence="7">The cysteine framework is XXIII (C-C-C-CC-C).</text>
</comment>
<comment type="mass spectrometry"/>
<comment type="miscellaneous">
    <text evidence="8">Negative results: does not affect (up to 50 uM) the Nav1.7/SCN9A channel, Drosophila Shaker channel and rat KCa1.1/KCNMA1 channel expressed in HEK293 cell, as well as on whole cell current of neurons from neonatal rat hippocampus and prefrontal cortex. In addition, no detectable effect is observed on either action potential amplitude and duration or Na(+) and Ca(2+) current amplitude and kinetics when im23a is tested on action potentials and depolarization-activated Na(+) and Ca(2+) currents in rat DRG neurons (PubMed:22399292).</text>
</comment>
<comment type="similarity">
    <text evidence="7">Belongs to the conotoxin K superfamily.</text>
</comment>
<protein>
    <recommendedName>
        <fullName evidence="5">Conotoxin im23b</fullName>
    </recommendedName>
    <alternativeName>
        <fullName evidence="6 10">Conopeptide im009</fullName>
    </alternativeName>
    <alternativeName>
        <fullName evidence="5">Im23.2</fullName>
    </alternativeName>
    <alternativeName>
        <fullName>U1-CTX-Ci1b</fullName>
    </alternativeName>
</protein>
<reference key="1">
    <citation type="journal article" date="2012" name="J. Biol. Chem.">
        <title>A helical conotoxin from Conus imperialis has a novel cysteine framework and defines a new superfamily.</title>
        <authorList>
            <person name="Ye M."/>
            <person name="Khoo K.K."/>
            <person name="Xu S."/>
            <person name="Zhou M."/>
            <person name="Boonyalai N."/>
            <person name="Perugini M.A."/>
            <person name="Shao X."/>
            <person name="Chi C."/>
            <person name="Galea C.A."/>
            <person name="Wang C."/>
            <person name="Norton R.S."/>
        </authorList>
    </citation>
    <scope>NUCLEOTIDE SEQUENCE [MRNA]</scope>
    <scope>PARTIAL PROTEIN SEQUENCE</scope>
    <scope>FUNCTION</scope>
    <scope>DISULFIDE BONDS</scope>
    <scope>MASS SPECTROMETRY</scope>
    <scope>SUBCELLULAR LOCATION</scope>
    <source>
        <tissue>Venom</tissue>
        <tissue>Venom duct</tissue>
    </source>
</reference>
<reference key="2">
    <citation type="journal article" date="2019" name="Mar. Drugs">
        <title>Transcriptomic-proteomic correlation in the predation-evoked venom of the cone snail, Conus imperialis.</title>
        <authorList>
            <person name="Jin A.H."/>
            <person name="Dutertre S."/>
            <person name="Dutt M."/>
            <person name="Lavergne V."/>
            <person name="Jones A."/>
            <person name="Lewis R.J."/>
            <person name="Alewood P.F."/>
        </authorList>
    </citation>
    <scope>NUCLEOTIDE SEQUENCE [MRNA]</scope>
    <scope>IDENTIFICATION BY MASS SPECTROMETRY</scope>
    <scope>SUBCELLULAR LOCATION</scope>
    <source>
        <tissue>Venom</tissue>
        <tissue>Venom duct</tissue>
    </source>
</reference>
<dbReference type="EMBL" id="FJ375239">
    <property type="protein sequence ID" value="ACQ65999.1"/>
    <property type="molecule type" value="mRNA"/>
</dbReference>
<dbReference type="EMBL" id="KT377403">
    <property type="protein sequence ID" value="AME17667.1"/>
    <property type="molecule type" value="mRNA"/>
</dbReference>
<dbReference type="SMR" id="D0PX85"/>
<dbReference type="GO" id="GO:0005576">
    <property type="term" value="C:extracellular region"/>
    <property type="evidence" value="ECO:0007669"/>
    <property type="project" value="UniProtKB-SubCell"/>
</dbReference>
<dbReference type="GO" id="GO:0090729">
    <property type="term" value="F:toxin activity"/>
    <property type="evidence" value="ECO:0007669"/>
    <property type="project" value="UniProtKB-KW"/>
</dbReference>
<dbReference type="Gene3D" id="1.10.10.2920">
    <property type="match status" value="1"/>
</dbReference>
<feature type="signal peptide" evidence="2">
    <location>
        <begin position="1"/>
        <end position="22"/>
    </location>
</feature>
<feature type="propeptide" id="PRO_0000417033" evidence="8">
    <location>
        <begin position="23"/>
        <end position="28"/>
    </location>
</feature>
<feature type="chain" id="PRO_5000825650" description="Conotoxin im23b" evidence="3">
    <location>
        <begin position="31"/>
        <end position="73"/>
    </location>
</feature>
<feature type="disulfide bond" evidence="1">
    <location>
        <begin position="34"/>
        <end position="41"/>
    </location>
</feature>
<feature type="disulfide bond" evidence="1">
    <location>
        <begin position="45"/>
        <end position="55"/>
    </location>
</feature>
<feature type="disulfide bond" evidence="1">
    <location>
        <begin position="56"/>
        <end position="71"/>
    </location>
</feature>
<organism>
    <name type="scientific">Conus imperialis</name>
    <name type="common">Imperial cone</name>
    <dbReference type="NCBI Taxonomy" id="35631"/>
    <lineage>
        <taxon>Eukaryota</taxon>
        <taxon>Metazoa</taxon>
        <taxon>Spiralia</taxon>
        <taxon>Lophotrochozoa</taxon>
        <taxon>Mollusca</taxon>
        <taxon>Gastropoda</taxon>
        <taxon>Caenogastropoda</taxon>
        <taxon>Neogastropoda</taxon>
        <taxon>Conoidea</taxon>
        <taxon>Conidae</taxon>
        <taxon>Conus</taxon>
        <taxon>Stephanoconus</taxon>
    </lineage>
</organism>